<protein>
    <recommendedName>
        <fullName>NADH dehydrogenase [ubiquinone] iron-sulfur protein 5</fullName>
    </recommendedName>
    <alternativeName>
        <fullName>Complex I-15 kDa</fullName>
        <shortName>CI-15 kDa</shortName>
    </alternativeName>
    <alternativeName>
        <fullName>NADH-ubiquinone oxidoreductase 15 kDa subunit</fullName>
    </alternativeName>
</protein>
<dbReference type="EMBL" id="CR860099">
    <property type="protein sequence ID" value="CAH92244.1"/>
    <property type="molecule type" value="mRNA"/>
</dbReference>
<dbReference type="RefSeq" id="NP_001126312.1">
    <property type="nucleotide sequence ID" value="NM_001132840.1"/>
</dbReference>
<dbReference type="RefSeq" id="XP_009250512.1">
    <property type="nucleotide sequence ID" value="XM_009252237.2"/>
</dbReference>
<dbReference type="RefSeq" id="XP_009250514.1">
    <property type="nucleotide sequence ID" value="XM_009252239.2"/>
</dbReference>
<dbReference type="SMR" id="P0CB87"/>
<dbReference type="FunCoup" id="P0CB87">
    <property type="interactions" value="877"/>
</dbReference>
<dbReference type="STRING" id="9601.ENSPPYP00000001746"/>
<dbReference type="Ensembl" id="ENSPPYT00000001803.3">
    <property type="protein sequence ID" value="ENSPPYP00000001746.2"/>
    <property type="gene ID" value="ENSPPYG00000001511.3"/>
</dbReference>
<dbReference type="GeneID" id="100173291"/>
<dbReference type="KEGG" id="pon:100173291"/>
<dbReference type="CTD" id="4725"/>
<dbReference type="eggNOG" id="KOG4110">
    <property type="taxonomic scope" value="Eukaryota"/>
</dbReference>
<dbReference type="GeneTree" id="ENSGT00940000158787"/>
<dbReference type="HOGENOM" id="CLU_176387_0_0_1"/>
<dbReference type="InParanoid" id="P0CB87"/>
<dbReference type="OrthoDB" id="9992197at2759"/>
<dbReference type="TreeFam" id="TF332111"/>
<dbReference type="Proteomes" id="UP000001595">
    <property type="component" value="Chromosome 1"/>
</dbReference>
<dbReference type="GO" id="GO:0005743">
    <property type="term" value="C:mitochondrial inner membrane"/>
    <property type="evidence" value="ECO:0007669"/>
    <property type="project" value="UniProtKB-SubCell"/>
</dbReference>
<dbReference type="GO" id="GO:0005758">
    <property type="term" value="C:mitochondrial intermembrane space"/>
    <property type="evidence" value="ECO:0007669"/>
    <property type="project" value="UniProtKB-SubCell"/>
</dbReference>
<dbReference type="GO" id="GO:0005739">
    <property type="term" value="C:mitochondrion"/>
    <property type="evidence" value="ECO:0000250"/>
    <property type="project" value="UniProtKB"/>
</dbReference>
<dbReference type="GO" id="GO:0045271">
    <property type="term" value="C:respiratory chain complex I"/>
    <property type="evidence" value="ECO:0000250"/>
    <property type="project" value="UniProtKB"/>
</dbReference>
<dbReference type="GO" id="GO:0032981">
    <property type="term" value="P:mitochondrial respiratory chain complex I assembly"/>
    <property type="evidence" value="ECO:0000250"/>
    <property type="project" value="UniProtKB"/>
</dbReference>
<dbReference type="CDD" id="cd24141">
    <property type="entry name" value="NDUFS5-like"/>
    <property type="match status" value="1"/>
</dbReference>
<dbReference type="InterPro" id="IPR019342">
    <property type="entry name" value="NADH_UbQ_OxRdtase_FeS-su5"/>
</dbReference>
<dbReference type="PANTHER" id="PTHR15224">
    <property type="entry name" value="NADH DEHYDROGENASE [UBIQUINONE] IRON-SULFUR PROTEIN 5"/>
    <property type="match status" value="1"/>
</dbReference>
<dbReference type="PANTHER" id="PTHR15224:SF1">
    <property type="entry name" value="NADH DEHYDROGENASE [UBIQUINONE] IRON-SULFUR PROTEIN 5"/>
    <property type="match status" value="1"/>
</dbReference>
<dbReference type="Pfam" id="PF10200">
    <property type="entry name" value="Ndufs5"/>
    <property type="match status" value="1"/>
</dbReference>
<dbReference type="PROSITE" id="PS51808">
    <property type="entry name" value="CHCH"/>
    <property type="match status" value="1"/>
</dbReference>
<sequence>MPFLDIQKRFGLNIDRWLTTQSAEQPYKMASRCHAFEKEWIECAHGIGYTRAEKECKIEYDDFIECLLRQKTMRRTGTIRKQRDKLIKEGKYTPPPHHIGKGEPRP</sequence>
<proteinExistence type="inferred from homology"/>
<accession>P0CB87</accession>
<accession>Q5R7L6</accession>
<comment type="function">
    <text evidence="1">Accessory subunit of the mitochondrial membrane respiratory chain NADH dehydrogenase (Complex I), that is believed not to be involved in catalysis. Complex I functions in the transfer of electrons from NADH to the respiratory chain. The immediate electron acceptor for the enzyme is believed to be ubiquinone.</text>
</comment>
<comment type="subunit">
    <text evidence="1">Mammalian complex I is composed of 45 different subunits. This is a component of the iron-sulfur (IP) fragment of the enzyme.</text>
</comment>
<comment type="subcellular location">
    <subcellularLocation>
        <location evidence="1">Mitochondrion inner membrane</location>
        <topology evidence="1">Peripheral membrane protein</topology>
    </subcellularLocation>
    <subcellularLocation>
        <location evidence="1">Mitochondrion intermembrane space</location>
    </subcellularLocation>
</comment>
<comment type="domain">
    <text evidence="1">Contains two C-X9-C motifs that are predicted to form a helix-coil-helix structure, permitting the formation of intramolecular disulfide bonds.</text>
</comment>
<comment type="similarity">
    <text evidence="4">Belongs to the complex I NDUFS5 subunit family.</text>
</comment>
<gene>
    <name type="primary">NDUFS5</name>
</gene>
<feature type="chain" id="PRO_0000251867" description="NADH dehydrogenase [ubiquinone] iron-sulfur protein 5">
    <location>
        <begin position="1"/>
        <end position="106"/>
    </location>
</feature>
<feature type="domain" description="CHCH" evidence="2">
    <location>
        <begin position="30"/>
        <end position="74"/>
    </location>
</feature>
<feature type="region of interest" description="Disordered" evidence="3">
    <location>
        <begin position="78"/>
        <end position="106"/>
    </location>
</feature>
<feature type="short sequence motif" description="Cx9C motif 1" evidence="2">
    <location>
        <begin position="33"/>
        <end position="43"/>
    </location>
</feature>
<feature type="short sequence motif" description="Cx9C motif 2" evidence="2">
    <location>
        <begin position="56"/>
        <end position="66"/>
    </location>
</feature>
<feature type="disulfide bond" evidence="2">
    <location>
        <begin position="33"/>
        <end position="66"/>
    </location>
</feature>
<feature type="disulfide bond" evidence="2">
    <location>
        <begin position="43"/>
        <end position="56"/>
    </location>
</feature>
<name>NDUS5_PONAB</name>
<organism>
    <name type="scientific">Pongo abelii</name>
    <name type="common">Sumatran orangutan</name>
    <name type="synonym">Pongo pygmaeus abelii</name>
    <dbReference type="NCBI Taxonomy" id="9601"/>
    <lineage>
        <taxon>Eukaryota</taxon>
        <taxon>Metazoa</taxon>
        <taxon>Chordata</taxon>
        <taxon>Craniata</taxon>
        <taxon>Vertebrata</taxon>
        <taxon>Euteleostomi</taxon>
        <taxon>Mammalia</taxon>
        <taxon>Eutheria</taxon>
        <taxon>Euarchontoglires</taxon>
        <taxon>Primates</taxon>
        <taxon>Haplorrhini</taxon>
        <taxon>Catarrhini</taxon>
        <taxon>Hominidae</taxon>
        <taxon>Pongo</taxon>
    </lineage>
</organism>
<keyword id="KW-1015">Disulfide bond</keyword>
<keyword id="KW-0249">Electron transport</keyword>
<keyword id="KW-0472">Membrane</keyword>
<keyword id="KW-0496">Mitochondrion</keyword>
<keyword id="KW-0999">Mitochondrion inner membrane</keyword>
<keyword id="KW-1185">Reference proteome</keyword>
<keyword id="KW-0679">Respiratory chain</keyword>
<keyword id="KW-0813">Transport</keyword>
<reference key="1">
    <citation type="submission" date="2004-11" db="EMBL/GenBank/DDBJ databases">
        <authorList>
            <consortium name="The German cDNA consortium"/>
        </authorList>
    </citation>
    <scope>NUCLEOTIDE SEQUENCE [LARGE SCALE MRNA]</scope>
    <source>
        <tissue>Heart</tissue>
    </source>
</reference>
<evidence type="ECO:0000250" key="1">
    <source>
        <dbReference type="UniProtKB" id="O43920"/>
    </source>
</evidence>
<evidence type="ECO:0000255" key="2">
    <source>
        <dbReference type="PROSITE-ProRule" id="PRU01150"/>
    </source>
</evidence>
<evidence type="ECO:0000256" key="3">
    <source>
        <dbReference type="SAM" id="MobiDB-lite"/>
    </source>
</evidence>
<evidence type="ECO:0000305" key="4"/>